<sequence>MHILTPTQAPLVPNPPHELMYTSSPLQISLPDFRRLCIFKGIYPPREPRNKKKVSKGSTAATTFYYTKDIQYLLHEPLLAKFREHKAVAKKIGRALGRGESGDASRLEKNLMPKVKLDHIIKERYPTFVDALRDLDDALSMLFLFANLPSSDHIPAKTIALCQRLTREFEHYVITSHSLRKSFLSIKGIYYQATIQGQDILWLVPYRFVQRTGGDIDFRIMGTFVEFYTTLLGFVNYRLYTSIGLVYPPKFNARSDEQGGELAAFQLEGKATATNGASNGHAEDAEINPEAQAIADRIGAMPDVEEEEATTAVAKTGAEDDEEEANEEIDKFEPTAPDADILPQPQASSAEVASLFAPFTFYLSRETPRGSLEFILKAFGCKRVGWDGVLGDGAFTTNESDPAITHQIVDRPALSNGAPASNVQETENGGAAAPKAQWPYSMMPGRTYVQPQWVWDSINQGKLLRADHYSPGADLPPHLSPWVKPKKGEYDPNLPLAAQQPEGEAEAFEDEGDEETAFDVDGDEDMEAIVDREGSVEVGEGMDVADDSEDDSDDDESDEEDGPAGDEDDLDSDAESDISEGEAARLQHQRELEAEATGKKLEVKKPTRKEENATIRKKAEKKKRAEEEERERQKMMLSNKKRKLLKRIEYGENKRDNESENLRRKRARVEKAKAAAEAV</sequence>
<reference key="1">
    <citation type="journal article" date="2013" name="G3 (Bethesda)">
        <title>Comparative genomics of a plant-pathogenic fungus, Pyrenophora tritici-repentis, reveals transduplication and the impact of repeat elements on pathogenicity and population divergence.</title>
        <authorList>
            <person name="Manning V.A."/>
            <person name="Pandelova I."/>
            <person name="Dhillon B."/>
            <person name="Wilhelm L.J."/>
            <person name="Goodwin S.B."/>
            <person name="Berlin A.M."/>
            <person name="Figueroa M."/>
            <person name="Freitag M."/>
            <person name="Hane J.K."/>
            <person name="Henrissat B."/>
            <person name="Holman W.H."/>
            <person name="Kodira C.D."/>
            <person name="Martin J."/>
            <person name="Oliver R.P."/>
            <person name="Robbertse B."/>
            <person name="Schackwitz W."/>
            <person name="Schwartz D.C."/>
            <person name="Spatafora J.W."/>
            <person name="Turgeon B.G."/>
            <person name="Yandava C."/>
            <person name="Young S."/>
            <person name="Zhou S."/>
            <person name="Zeng Q."/>
            <person name="Grigoriev I.V."/>
            <person name="Ma L.-J."/>
            <person name="Ciuffetti L.M."/>
        </authorList>
    </citation>
    <scope>NUCLEOTIDE SEQUENCE [LARGE SCALE GENOMIC DNA]</scope>
    <source>
        <strain>Pt-1C-BFP</strain>
    </source>
</reference>
<feature type="chain" id="PRO_0000370502" description="Pescadillo homolog">
    <location>
        <begin position="1"/>
        <end position="679"/>
    </location>
</feature>
<feature type="domain" description="BRCT" evidence="1">
    <location>
        <begin position="351"/>
        <end position="471"/>
    </location>
</feature>
<feature type="region of interest" description="Disordered" evidence="2">
    <location>
        <begin position="413"/>
        <end position="437"/>
    </location>
</feature>
<feature type="region of interest" description="Disordered" evidence="2">
    <location>
        <begin position="480"/>
        <end position="679"/>
    </location>
</feature>
<feature type="coiled-coil region" evidence="1">
    <location>
        <begin position="573"/>
        <end position="679"/>
    </location>
</feature>
<feature type="compositionally biased region" description="Polar residues" evidence="2">
    <location>
        <begin position="418"/>
        <end position="427"/>
    </location>
</feature>
<feature type="compositionally biased region" description="Acidic residues" evidence="2">
    <location>
        <begin position="503"/>
        <end position="528"/>
    </location>
</feature>
<feature type="compositionally biased region" description="Acidic residues" evidence="2">
    <location>
        <begin position="543"/>
        <end position="580"/>
    </location>
</feature>
<feature type="compositionally biased region" description="Basic and acidic residues" evidence="2">
    <location>
        <begin position="582"/>
        <end position="614"/>
    </location>
</feature>
<feature type="compositionally biased region" description="Basic and acidic residues" evidence="2">
    <location>
        <begin position="623"/>
        <end position="634"/>
    </location>
</feature>
<feature type="compositionally biased region" description="Basic and acidic residues" evidence="2">
    <location>
        <begin position="646"/>
        <end position="662"/>
    </location>
</feature>
<feature type="compositionally biased region" description="Basic and acidic residues" evidence="2">
    <location>
        <begin position="669"/>
        <end position="679"/>
    </location>
</feature>
<organism>
    <name type="scientific">Pyrenophora tritici-repentis (strain Pt-1C-BFP)</name>
    <name type="common">Wheat tan spot fungus</name>
    <name type="synonym">Drechslera tritici-repentis</name>
    <dbReference type="NCBI Taxonomy" id="426418"/>
    <lineage>
        <taxon>Eukaryota</taxon>
        <taxon>Fungi</taxon>
        <taxon>Dikarya</taxon>
        <taxon>Ascomycota</taxon>
        <taxon>Pezizomycotina</taxon>
        <taxon>Dothideomycetes</taxon>
        <taxon>Pleosporomycetidae</taxon>
        <taxon>Pleosporales</taxon>
        <taxon>Pleosporineae</taxon>
        <taxon>Pleosporaceae</taxon>
        <taxon>Pyrenophora</taxon>
    </lineage>
</organism>
<name>PESC_PYRTR</name>
<keyword id="KW-0175">Coiled coil</keyword>
<keyword id="KW-0539">Nucleus</keyword>
<keyword id="KW-1185">Reference proteome</keyword>
<keyword id="KW-0690">Ribosome biogenesis</keyword>
<keyword id="KW-0698">rRNA processing</keyword>
<gene>
    <name type="primary">nop7</name>
    <name type="ORF">PTRG_06919</name>
</gene>
<accession>B2WBA7</accession>
<evidence type="ECO:0000255" key="1">
    <source>
        <dbReference type="HAMAP-Rule" id="MF_03028"/>
    </source>
</evidence>
<evidence type="ECO:0000256" key="2">
    <source>
        <dbReference type="SAM" id="MobiDB-lite"/>
    </source>
</evidence>
<evidence type="ECO:0000305" key="3"/>
<proteinExistence type="inferred from homology"/>
<comment type="function">
    <text evidence="1">Component of the NOP7 complex, which is required for maturation of the 25S and 5.8S ribosomal RNAs and formation of the 60S ribosome.</text>
</comment>
<comment type="subunit">
    <text evidence="1">Component of the NOP7 complex, composed of erb1, nop7 and ytm1. The complex is held together by erb1, which interacts with nop7 via its N-terminal domain and with ytm1 via a high-affinity interaction between the seven-bladed beta-propeller domains of the 2 proteins. The NOP7 complex associates with the 66S pre-ribosome.</text>
</comment>
<comment type="subcellular location">
    <subcellularLocation>
        <location evidence="1">Nucleus</location>
        <location evidence="1">Nucleolus</location>
    </subcellularLocation>
    <subcellularLocation>
        <location evidence="1">Nucleus</location>
        <location evidence="1">Nucleoplasm</location>
    </subcellularLocation>
</comment>
<comment type="similarity">
    <text evidence="1">Belongs to the pescadillo family.</text>
</comment>
<comment type="sequence caution" evidence="3">
    <conflict type="erroneous gene model prediction">
        <sequence resource="EMBL-CDS" id="EDU49839"/>
    </conflict>
</comment>
<dbReference type="EMBL" id="DS231621">
    <property type="protein sequence ID" value="EDU49839.1"/>
    <property type="status" value="ALT_SEQ"/>
    <property type="molecule type" value="Genomic_DNA"/>
</dbReference>
<dbReference type="RefSeq" id="XP_001937252.1">
    <property type="nucleotide sequence ID" value="XM_001937217.1"/>
</dbReference>
<dbReference type="SMR" id="B2WBA7"/>
<dbReference type="FunCoup" id="B2WBA7">
    <property type="interactions" value="1235"/>
</dbReference>
<dbReference type="STRING" id="426418.B2WBA7"/>
<dbReference type="GeneID" id="6345188"/>
<dbReference type="KEGG" id="ptrr:6345188"/>
<dbReference type="eggNOG" id="KOG2481">
    <property type="taxonomic scope" value="Eukaryota"/>
</dbReference>
<dbReference type="InParanoid" id="B2WBA7"/>
<dbReference type="OrthoDB" id="30393at28556"/>
<dbReference type="Proteomes" id="UP000001471">
    <property type="component" value="Unassembled WGS sequence"/>
</dbReference>
<dbReference type="GO" id="GO:0005654">
    <property type="term" value="C:nucleoplasm"/>
    <property type="evidence" value="ECO:0007669"/>
    <property type="project" value="UniProtKB-SubCell"/>
</dbReference>
<dbReference type="GO" id="GO:0070545">
    <property type="term" value="C:PeBoW complex"/>
    <property type="evidence" value="ECO:0007669"/>
    <property type="project" value="TreeGrafter"/>
</dbReference>
<dbReference type="GO" id="GO:0030687">
    <property type="term" value="C:preribosome, large subunit precursor"/>
    <property type="evidence" value="ECO:0007669"/>
    <property type="project" value="UniProtKB-UniRule"/>
</dbReference>
<dbReference type="GO" id="GO:0043021">
    <property type="term" value="F:ribonucleoprotein complex binding"/>
    <property type="evidence" value="ECO:0007669"/>
    <property type="project" value="UniProtKB-UniRule"/>
</dbReference>
<dbReference type="GO" id="GO:0003723">
    <property type="term" value="F:RNA binding"/>
    <property type="evidence" value="ECO:0007669"/>
    <property type="project" value="TreeGrafter"/>
</dbReference>
<dbReference type="GO" id="GO:0000466">
    <property type="term" value="P:maturation of 5.8S rRNA from tricistronic rRNA transcript (SSU-rRNA, 5.8S rRNA, LSU-rRNA)"/>
    <property type="evidence" value="ECO:0007669"/>
    <property type="project" value="UniProtKB-UniRule"/>
</dbReference>
<dbReference type="GO" id="GO:0000463">
    <property type="term" value="P:maturation of LSU-rRNA from tricistronic rRNA transcript (SSU-rRNA, 5.8S rRNA, LSU-rRNA)"/>
    <property type="evidence" value="ECO:0007669"/>
    <property type="project" value="UniProtKB-UniRule"/>
</dbReference>
<dbReference type="CDD" id="cd17709">
    <property type="entry name" value="BRCT_pescadillo_like"/>
    <property type="match status" value="1"/>
</dbReference>
<dbReference type="Gene3D" id="3.40.50.10190">
    <property type="entry name" value="BRCT domain"/>
    <property type="match status" value="1"/>
</dbReference>
<dbReference type="HAMAP" id="MF_03028">
    <property type="entry name" value="Pescadillo"/>
    <property type="match status" value="1"/>
</dbReference>
<dbReference type="InterPro" id="IPR001357">
    <property type="entry name" value="BRCT_dom"/>
</dbReference>
<dbReference type="InterPro" id="IPR036420">
    <property type="entry name" value="BRCT_dom_sf"/>
</dbReference>
<dbReference type="InterPro" id="IPR010613">
    <property type="entry name" value="PES"/>
</dbReference>
<dbReference type="PANTHER" id="PTHR12221">
    <property type="entry name" value="PESCADILLO - RELATED"/>
    <property type="match status" value="1"/>
</dbReference>
<dbReference type="PANTHER" id="PTHR12221:SF6">
    <property type="entry name" value="PESCADILLO HOMOLOG"/>
    <property type="match status" value="1"/>
</dbReference>
<dbReference type="Pfam" id="PF06732">
    <property type="entry name" value="Pescadillo_N"/>
    <property type="match status" value="1"/>
</dbReference>
<dbReference type="SUPFAM" id="SSF52113">
    <property type="entry name" value="BRCT domain"/>
    <property type="match status" value="1"/>
</dbReference>
<dbReference type="PROSITE" id="PS50172">
    <property type="entry name" value="BRCT"/>
    <property type="match status" value="1"/>
</dbReference>
<protein>
    <recommendedName>
        <fullName evidence="1">Pescadillo homolog</fullName>
    </recommendedName>
    <alternativeName>
        <fullName evidence="1">Nucleolar protein 7 homolog</fullName>
    </alternativeName>
</protein>